<reference key="1">
    <citation type="journal article" date="2000" name="DNA Res.">
        <title>Structural analysis of Arabidopsis thaliana chromosome 3. I. Sequence features of the regions of 4,504,864 bp covered by sixty P1 and TAC clones.</title>
        <authorList>
            <person name="Sato S."/>
            <person name="Nakamura Y."/>
            <person name="Kaneko T."/>
            <person name="Katoh T."/>
            <person name="Asamizu E."/>
            <person name="Tabata S."/>
        </authorList>
    </citation>
    <scope>NUCLEOTIDE SEQUENCE [LARGE SCALE GENOMIC DNA]</scope>
    <source>
        <strain>cv. Columbia</strain>
    </source>
</reference>
<reference key="2">
    <citation type="journal article" date="2017" name="Plant J.">
        <title>Araport11: a complete reannotation of the Arabidopsis thaliana reference genome.</title>
        <authorList>
            <person name="Cheng C.Y."/>
            <person name="Krishnakumar V."/>
            <person name="Chan A.P."/>
            <person name="Thibaud-Nissen F."/>
            <person name="Schobel S."/>
            <person name="Town C.D."/>
        </authorList>
    </citation>
    <scope>GENOME REANNOTATION</scope>
    <source>
        <strain>cv. Columbia</strain>
    </source>
</reference>
<reference key="3">
    <citation type="journal article" date="2003" name="Science">
        <title>Empirical analysis of transcriptional activity in the Arabidopsis genome.</title>
        <authorList>
            <person name="Yamada K."/>
            <person name="Lim J."/>
            <person name="Dale J.M."/>
            <person name="Chen H."/>
            <person name="Shinn P."/>
            <person name="Palm C.J."/>
            <person name="Southwick A.M."/>
            <person name="Wu H.C."/>
            <person name="Kim C.J."/>
            <person name="Nguyen M."/>
            <person name="Pham P.K."/>
            <person name="Cheuk R.F."/>
            <person name="Karlin-Newmann G."/>
            <person name="Liu S.X."/>
            <person name="Lam B."/>
            <person name="Sakano H."/>
            <person name="Wu T."/>
            <person name="Yu G."/>
            <person name="Miranda M."/>
            <person name="Quach H.L."/>
            <person name="Tripp M."/>
            <person name="Chang C.H."/>
            <person name="Lee J.M."/>
            <person name="Toriumi M.J."/>
            <person name="Chan M.M."/>
            <person name="Tang C.C."/>
            <person name="Onodera C.S."/>
            <person name="Deng J.M."/>
            <person name="Akiyama K."/>
            <person name="Ansari Y."/>
            <person name="Arakawa T."/>
            <person name="Banh J."/>
            <person name="Banno F."/>
            <person name="Bowser L."/>
            <person name="Brooks S.Y."/>
            <person name="Carninci P."/>
            <person name="Chao Q."/>
            <person name="Choy N."/>
            <person name="Enju A."/>
            <person name="Goldsmith A.D."/>
            <person name="Gurjal M."/>
            <person name="Hansen N.F."/>
            <person name="Hayashizaki Y."/>
            <person name="Johnson-Hopson C."/>
            <person name="Hsuan V.W."/>
            <person name="Iida K."/>
            <person name="Karnes M."/>
            <person name="Khan S."/>
            <person name="Koesema E."/>
            <person name="Ishida J."/>
            <person name="Jiang P.X."/>
            <person name="Jones T."/>
            <person name="Kawai J."/>
            <person name="Kamiya A."/>
            <person name="Meyers C."/>
            <person name="Nakajima M."/>
            <person name="Narusaka M."/>
            <person name="Seki M."/>
            <person name="Sakurai T."/>
            <person name="Satou M."/>
            <person name="Tamse R."/>
            <person name="Vaysberg M."/>
            <person name="Wallender E.K."/>
            <person name="Wong C."/>
            <person name="Yamamura Y."/>
            <person name="Yuan S."/>
            <person name="Shinozaki K."/>
            <person name="Davis R.W."/>
            <person name="Theologis A."/>
            <person name="Ecker J.R."/>
        </authorList>
    </citation>
    <scope>NUCLEOTIDE SEQUENCE [LARGE SCALE MRNA]</scope>
    <source>
        <strain>cv. Columbia</strain>
    </source>
</reference>
<reference key="4">
    <citation type="submission" date="2006-07" db="EMBL/GenBank/DDBJ databases">
        <title>Large-scale analysis of RIKEN Arabidopsis full-length (RAFL) cDNAs.</title>
        <authorList>
            <person name="Totoki Y."/>
            <person name="Seki M."/>
            <person name="Ishida J."/>
            <person name="Nakajima M."/>
            <person name="Enju A."/>
            <person name="Kamiya A."/>
            <person name="Narusaka M."/>
            <person name="Shin-i T."/>
            <person name="Nakagawa M."/>
            <person name="Sakamoto N."/>
            <person name="Oishi K."/>
            <person name="Kohara Y."/>
            <person name="Kobayashi M."/>
            <person name="Toyoda A."/>
            <person name="Sakaki Y."/>
            <person name="Sakurai T."/>
            <person name="Iida K."/>
            <person name="Akiyama K."/>
            <person name="Satou M."/>
            <person name="Toyoda T."/>
            <person name="Konagaya A."/>
            <person name="Carninci P."/>
            <person name="Kawai J."/>
            <person name="Hayashizaki Y."/>
            <person name="Shinozaki K."/>
        </authorList>
    </citation>
    <scope>NUCLEOTIDE SEQUENCE [LARGE SCALE MRNA]</scope>
    <source>
        <strain>cv. Columbia</strain>
    </source>
</reference>
<reference key="5">
    <citation type="journal article" date="2001" name="BMC Genomics">
        <title>Kinesins in the Arabidopsis genome: a comparative analysis among eukaryotes.</title>
        <authorList>
            <person name="Reddy A.S."/>
            <person name="Day I.S."/>
        </authorList>
    </citation>
    <scope>GENE FAMILY</scope>
</reference>
<reference key="6">
    <citation type="journal article" date="2005" name="Mol. Biol. Cell">
        <title>An internal motor kinesin is associated with the Golgi apparatus and plays a role in trichome morphogenesis in Arabidopsis.</title>
        <authorList>
            <person name="Lu L."/>
            <person name="Lee Y.R."/>
            <person name="Pan R."/>
            <person name="Maloof J.N."/>
            <person name="Liu B."/>
        </authorList>
    </citation>
    <scope>FUNCTION</scope>
    <scope>DISRUPTION PHENOTYPE</scope>
    <scope>SUBCELLULAR LOCATION</scope>
    <scope>TISSUE SPECIFICITY</scope>
    <source>
        <strain>cv. Columbia</strain>
    </source>
</reference>
<reference key="7">
    <citation type="journal article" date="2006" name="BMC Genomics">
        <title>Comprehensive comparative analysis of kinesins in photosynthetic eukaryotes.</title>
        <authorList>
            <person name="Richardson D.N."/>
            <person name="Simmons M.P."/>
            <person name="Reddy A.S."/>
        </authorList>
    </citation>
    <scope>GENE FAMILY</scope>
    <scope>NOMENCLATURE</scope>
</reference>
<reference key="8">
    <citation type="journal article" date="2009" name="BMC Plant Biol.">
        <title>AtKinesin-13A is located on Golgi-associated vesicle and involved in vesicle formation/budding in Arabidopsis root-cap peripheral cells.</title>
        <authorList>
            <person name="Wei L."/>
            <person name="Zhang W."/>
            <person name="Liu Z."/>
            <person name="Li Y."/>
        </authorList>
    </citation>
    <scope>FUNCTION</scope>
    <scope>SUBCELLULAR LOCATION</scope>
    <scope>TISSUE SPECIFICITY</scope>
    <scope>DISRUPTION PHENOTYPE</scope>
</reference>
<reference key="9">
    <citation type="journal article" date="2010" name="Eur. J. Cell Biol.">
        <title>RIP3 and AtKinesin-13A - a novel interaction linking Rho proteins of plants to microtubules.</title>
        <authorList>
            <person name="Mucha E."/>
            <person name="Hoefle C."/>
            <person name="Huckelhoven R."/>
            <person name="Berken A."/>
        </authorList>
    </citation>
    <scope>INTERACTION WITH ICR2 AND ICR5</scope>
    <scope>SUBCELLULAR LOCATION</scope>
</reference>
<reference key="10">
    <citation type="journal article" date="2012" name="Protoplasma">
        <title>Functions of the Arabidopsis kinesin superfamily of microtubule-based motor proteins.</title>
        <authorList>
            <person name="Zhu C."/>
            <person name="Dixit R."/>
        </authorList>
    </citation>
    <scope>REVIEW</scope>
</reference>
<reference key="11">
    <citation type="journal article" date="2013" name="Plant Cell">
        <title>Rho of plant GTPase signaling regulates the behavior of Arabidopsis kinesin-13A to establish secondary cell wall patterns.</title>
        <authorList>
            <person name="Oda Y."/>
            <person name="Fukuda H."/>
        </authorList>
    </citation>
    <scope>TISSUE SPECIFICITY</scope>
    <scope>SUBCELLULAR LOCATION</scope>
    <scope>FUNCTION</scope>
    <scope>INTERACTION WITH ICR5</scope>
    <scope>SUBUNIT</scope>
    <scope>DISRUPTION PHENOTYPE</scope>
</reference>
<reference key="12">
    <citation type="journal article" date="2014" name="PLoS Genet.">
        <title>Atkinesin-13A modulates cell-wall synthesis and cell expansion in Arabidopsis thaliana via the THESEUS1 pathway.</title>
        <authorList>
            <person name="Fujikura U."/>
            <person name="Elsaesser L."/>
            <person name="Breuninger H."/>
            <person name="Sanchez-Rodriguez C."/>
            <person name="Ivakov A."/>
            <person name="Laux T."/>
            <person name="Findlay K."/>
            <person name="Persson S."/>
            <person name="Lenhard M."/>
        </authorList>
    </citation>
    <scope>MUTAGENESIS OF LEU-334</scope>
    <scope>DISRUPTION PHENOTYPE</scope>
    <scope>FUNCTION</scope>
</reference>
<comment type="function">
    <text evidence="4 5 7 8">Internal motor kinesin involved in trichome morphogenesis (PubMed:15574882). Participates in regulating the formation of Golgi-associated vesicles (PubMed:19939242). Plays a central role in microtubule disassembly via the active ARAC10-ICR5 cascade, which establishes the secondary cell wall pattern in metaxylem vessel cells (PubMed:24280391). Acts redundantly with KIN13B to modulate cell wall synthesis and cell expansion via the THE1 pathway (PubMed:25232944).</text>
</comment>
<comment type="subunit">
    <text evidence="6 7">Component of the active ARAC10-IRC5-KIN13A complex (PubMed:24280391). Interacts (via-C-terminus) with ICR2 and ICR5 (via N-terminus). No interactions with ICR1 (PubMed:20832900, PubMed:24280391).</text>
</comment>
<comment type="subcellular location">
    <subcellularLocation>
        <location evidence="4 5">Golgi apparatus</location>
        <location evidence="4 5">Golgi stack</location>
    </subcellularLocation>
    <subcellularLocation>
        <location evidence="6 7">Cytoplasm</location>
        <location evidence="6 7">Cytoskeleton</location>
    </subcellularLocation>
    <text evidence="6 7">Localized to cortical microtubules in secondary wall pits when associated with ICR5. The N-terminal region of the protein is required for its localization at microtubules, but the truncated protein can be recruited to microtubules upon interaction with ICR5.</text>
</comment>
<comment type="tissue specificity">
    <text evidence="4 5 7">Expressed in leaves, roots, young and mature seedlings (PubMed:15574882, PubMed:19939242). Preferentially expressed in the secondary cell wall pits of differentiating metaxylem vessel cells (at the protein level) (PubMed:24280391).</text>
</comment>
<comment type="disruption phenotype">
    <text evidence="4 5 7 8">No obvious growth phenotype, but leaf trichomes with 4 branches instead of 3 and decreased size and number of Golgi-associated vesicles in root-cap peripheral cells (PubMed:15574882, PubMed:19939242). Smaller pits in the secondary cell walls of root metaxylem vessels (PubMed:24280391). Enlarged petals and overbranched trichomes (PubMed:25232944).</text>
</comment>
<comment type="similarity">
    <text evidence="10">Belongs to the TRAFAC class myosin-kinesin ATPase superfamily. Kinesin family. KIN-13 subfamily.</text>
</comment>
<comment type="sequence caution" evidence="12">
    <conflict type="erroneous gene model prediction">
        <sequence resource="EMBL-CDS" id="BAB02754"/>
    </conflict>
</comment>
<sequence length="794" mass="89082">MGGQMQQNNAAAATALYDGALPTNDAGDAVMARWLQSAGLQHLASPVASTGNDQRHLPNLLMQGYGAQTAEEKQRLFQLMRNLNFNGESTSESYTPTAHTSAAMPSSEGFFSPEFRGDFGAGLLDLHAMDDTELLSEHVITEPFEPSPFMPSVNKEFEEDYNLAANRQQRQQTEAEPLGLLPKSDKENNSVAKIKVVVRKRPLNKKETAKKEEDVVTVSDNSLTVHEPRVKVDLTAYVEKHEFCFDAVLDEDVSNDEVYRATIEPIIPIIFQRTKATCFAYGQTGSGKTFTMKPLPIRAVEDLMRLLRQPVYSNQRFKLWLSYFEIYGGKLFDLLSERKKLCMREDGRQQVCIVGLQEYEVSDVQIVKDFIEKGNAERSTGSTGANEESSRSHAILQLVVKKHVEVKDTRRRNNDSNELPGKVVGKISFIDLAGSERGADTTDNDRQTRIEGAEINKSLLALKECIRALDNDQLHIPFRGSKLTEVLRDSFVGNSRTVMISCISPNAGSCEHTLNTLRYADRVKSLSKSGNSKKDQTANSMPPVNKDPLLGPNDVEDVFEPPQEVNVPETRRRVVEKDSNSSTSGIDFRQPTNYREESGIPSFSMDKGRSEPNSSFAGSTSQRNNISSYPQETSDREEKVKKVSPPRGKGLREEKPDRPQNWSKRDVSSSDIPTLTNFRQNASETASRQYETASRQYETDPSLDENLDALLEEEEALIAAHRKEIEDTMEIVREEMKLLAEVDQPGSMIENYVTQLSFVLSRKAAGLVSLQARLARFQHRLKEQEILSRKRVPR</sequence>
<protein>
    <recommendedName>
        <fullName evidence="12">Kinesin-like protein KIN-13A</fullName>
    </recommendedName>
    <alternativeName>
        <fullName evidence="9 11">AtKINESIN-13A</fullName>
        <shortName evidence="11">AtKIN13A</shortName>
    </alternativeName>
</protein>
<accession>Q940B8</accession>
<accession>Q56WU1</accession>
<accession>Q9LUS1</accession>
<keyword id="KW-0067">ATP-binding</keyword>
<keyword id="KW-0175">Coiled coil</keyword>
<keyword id="KW-0963">Cytoplasm</keyword>
<keyword id="KW-0206">Cytoskeleton</keyword>
<keyword id="KW-0333">Golgi apparatus</keyword>
<keyword id="KW-0493">Microtubule</keyword>
<keyword id="KW-0505">Motor protein</keyword>
<keyword id="KW-0547">Nucleotide-binding</keyword>
<keyword id="KW-1185">Reference proteome</keyword>
<feature type="chain" id="PRO_0000425453" description="Kinesin-like protein KIN-13A">
    <location>
        <begin position="1"/>
        <end position="794"/>
    </location>
</feature>
<feature type="domain" description="Kinesin motor" evidence="2">
    <location>
        <begin position="193"/>
        <end position="526"/>
    </location>
</feature>
<feature type="region of interest" description="Disordered" evidence="3">
    <location>
        <begin position="525"/>
        <end position="699"/>
    </location>
</feature>
<feature type="coiled-coil region" evidence="1">
    <location>
        <begin position="705"/>
        <end position="742"/>
    </location>
</feature>
<feature type="compositionally biased region" description="Basic and acidic residues" evidence="3">
    <location>
        <begin position="569"/>
        <end position="579"/>
    </location>
</feature>
<feature type="compositionally biased region" description="Polar residues" evidence="3">
    <location>
        <begin position="580"/>
        <end position="593"/>
    </location>
</feature>
<feature type="compositionally biased region" description="Polar residues" evidence="3">
    <location>
        <begin position="611"/>
        <end position="632"/>
    </location>
</feature>
<feature type="compositionally biased region" description="Basic and acidic residues" evidence="3">
    <location>
        <begin position="650"/>
        <end position="668"/>
    </location>
</feature>
<feature type="compositionally biased region" description="Polar residues" evidence="3">
    <location>
        <begin position="669"/>
        <end position="696"/>
    </location>
</feature>
<feature type="binding site" evidence="2">
    <location>
        <begin position="282"/>
        <end position="289"/>
    </location>
    <ligand>
        <name>ATP</name>
        <dbReference type="ChEBI" id="CHEBI:30616"/>
    </ligand>
</feature>
<feature type="mutagenesis site" description="In kin13a-3: Enhanced petals and leaves size and overbranched trichomes." evidence="8">
    <original>L</original>
    <variation>F</variation>
    <location>
        <position position="334"/>
    </location>
</feature>
<feature type="sequence conflict" description="In Ref. 4; BAD94391." evidence="12" ref="4">
    <original>E</original>
    <variation>G</variation>
    <location>
        <position position="684"/>
    </location>
</feature>
<dbReference type="EMBL" id="AB022217">
    <property type="protein sequence ID" value="BAB02754.1"/>
    <property type="status" value="ALT_SEQ"/>
    <property type="molecule type" value="Genomic_DNA"/>
</dbReference>
<dbReference type="EMBL" id="CP002686">
    <property type="protein sequence ID" value="AEE75845.1"/>
    <property type="molecule type" value="Genomic_DNA"/>
</dbReference>
<dbReference type="EMBL" id="CP002686">
    <property type="protein sequence ID" value="AEE75846.1"/>
    <property type="molecule type" value="Genomic_DNA"/>
</dbReference>
<dbReference type="EMBL" id="AY056129">
    <property type="protein sequence ID" value="AAL07208.1"/>
    <property type="molecule type" value="mRNA"/>
</dbReference>
<dbReference type="EMBL" id="AK226569">
    <property type="protein sequence ID" value="BAE98696.1"/>
    <property type="molecule type" value="mRNA"/>
</dbReference>
<dbReference type="EMBL" id="AK221940">
    <property type="protein sequence ID" value="BAD94391.1"/>
    <property type="molecule type" value="mRNA"/>
</dbReference>
<dbReference type="RefSeq" id="NP_188285.1">
    <property type="nucleotide sequence ID" value="NM_112536.3"/>
</dbReference>
<dbReference type="RefSeq" id="NP_850598.1">
    <property type="nucleotide sequence ID" value="NM_180267.2"/>
</dbReference>
<dbReference type="SMR" id="Q940B8"/>
<dbReference type="BioGRID" id="6249">
    <property type="interactions" value="4"/>
</dbReference>
<dbReference type="FunCoup" id="Q940B8">
    <property type="interactions" value="3554"/>
</dbReference>
<dbReference type="IntAct" id="Q940B8">
    <property type="interactions" value="1"/>
</dbReference>
<dbReference type="STRING" id="3702.Q940B8"/>
<dbReference type="GlyGen" id="Q940B8">
    <property type="glycosylation" value="1 site"/>
</dbReference>
<dbReference type="iPTMnet" id="Q940B8"/>
<dbReference type="PaxDb" id="3702-AT3G16630.1"/>
<dbReference type="ProteomicsDB" id="237106"/>
<dbReference type="EnsemblPlants" id="AT3G16630.1">
    <property type="protein sequence ID" value="AT3G16630.1"/>
    <property type="gene ID" value="AT3G16630"/>
</dbReference>
<dbReference type="EnsemblPlants" id="AT3G16630.2">
    <property type="protein sequence ID" value="AT3G16630.2"/>
    <property type="gene ID" value="AT3G16630"/>
</dbReference>
<dbReference type="GeneID" id="820915"/>
<dbReference type="Gramene" id="AT3G16630.1">
    <property type="protein sequence ID" value="AT3G16630.1"/>
    <property type="gene ID" value="AT3G16630"/>
</dbReference>
<dbReference type="Gramene" id="AT3G16630.2">
    <property type="protein sequence ID" value="AT3G16630.2"/>
    <property type="gene ID" value="AT3G16630"/>
</dbReference>
<dbReference type="KEGG" id="ath:AT3G16630"/>
<dbReference type="Araport" id="AT3G16630"/>
<dbReference type="TAIR" id="AT3G16630">
    <property type="gene designation" value="KINESIN-13A"/>
</dbReference>
<dbReference type="eggNOG" id="KOG0246">
    <property type="taxonomic scope" value="Eukaryota"/>
</dbReference>
<dbReference type="HOGENOM" id="CLU_001485_19_0_1"/>
<dbReference type="InParanoid" id="Q940B8"/>
<dbReference type="OMA" id="PFIPKEM"/>
<dbReference type="OrthoDB" id="3176171at2759"/>
<dbReference type="PhylomeDB" id="Q940B8"/>
<dbReference type="PRO" id="PR:Q940B8"/>
<dbReference type="Proteomes" id="UP000006548">
    <property type="component" value="Chromosome 3"/>
</dbReference>
<dbReference type="ExpressionAtlas" id="Q940B8">
    <property type="expression patterns" value="baseline and differential"/>
</dbReference>
<dbReference type="GO" id="GO:0005795">
    <property type="term" value="C:Golgi stack"/>
    <property type="evidence" value="ECO:0000314"/>
    <property type="project" value="TAIR"/>
</dbReference>
<dbReference type="GO" id="GO:0005874">
    <property type="term" value="C:microtubule"/>
    <property type="evidence" value="ECO:0000314"/>
    <property type="project" value="TAIR"/>
</dbReference>
<dbReference type="GO" id="GO:0009531">
    <property type="term" value="C:secondary cell wall"/>
    <property type="evidence" value="ECO:0000314"/>
    <property type="project" value="UniProtKB"/>
</dbReference>
<dbReference type="GO" id="GO:0005524">
    <property type="term" value="F:ATP binding"/>
    <property type="evidence" value="ECO:0007669"/>
    <property type="project" value="UniProtKB-KW"/>
</dbReference>
<dbReference type="GO" id="GO:0008017">
    <property type="term" value="F:microtubule binding"/>
    <property type="evidence" value="ECO:0007669"/>
    <property type="project" value="InterPro"/>
</dbReference>
<dbReference type="GO" id="GO:0003777">
    <property type="term" value="F:microtubule motor activity"/>
    <property type="evidence" value="ECO:0007669"/>
    <property type="project" value="InterPro"/>
</dbReference>
<dbReference type="GO" id="GO:0090058">
    <property type="term" value="P:metaxylem development"/>
    <property type="evidence" value="ECO:0000315"/>
    <property type="project" value="UniProtKB"/>
</dbReference>
<dbReference type="GO" id="GO:0007019">
    <property type="term" value="P:microtubule depolymerization"/>
    <property type="evidence" value="ECO:0000314"/>
    <property type="project" value="UniProtKB"/>
</dbReference>
<dbReference type="GO" id="GO:0007018">
    <property type="term" value="P:microtubule-based movement"/>
    <property type="evidence" value="ECO:0007669"/>
    <property type="project" value="InterPro"/>
</dbReference>
<dbReference type="GO" id="GO:0009834">
    <property type="term" value="P:plant-type secondary cell wall biogenesis"/>
    <property type="evidence" value="ECO:0000315"/>
    <property type="project" value="UniProtKB"/>
</dbReference>
<dbReference type="GO" id="GO:1903338">
    <property type="term" value="P:regulation of cell wall organization or biogenesis"/>
    <property type="evidence" value="ECO:0000315"/>
    <property type="project" value="UniProtKB"/>
</dbReference>
<dbReference type="GO" id="GO:0010090">
    <property type="term" value="P:trichome morphogenesis"/>
    <property type="evidence" value="ECO:0000315"/>
    <property type="project" value="UniProtKB"/>
</dbReference>
<dbReference type="CDD" id="cd01367">
    <property type="entry name" value="KISc_KIF2_like"/>
    <property type="match status" value="1"/>
</dbReference>
<dbReference type="FunFam" id="3.40.850.10:FF:000012">
    <property type="entry name" value="Kinesin-like protein"/>
    <property type="match status" value="1"/>
</dbReference>
<dbReference type="Gene3D" id="3.40.850.10">
    <property type="entry name" value="Kinesin motor domain"/>
    <property type="match status" value="1"/>
</dbReference>
<dbReference type="InterPro" id="IPR027640">
    <property type="entry name" value="Kinesin-like_fam"/>
</dbReference>
<dbReference type="InterPro" id="IPR019821">
    <property type="entry name" value="Kinesin_motor_CS"/>
</dbReference>
<dbReference type="InterPro" id="IPR001752">
    <property type="entry name" value="Kinesin_motor_dom"/>
</dbReference>
<dbReference type="InterPro" id="IPR036961">
    <property type="entry name" value="Kinesin_motor_dom_sf"/>
</dbReference>
<dbReference type="InterPro" id="IPR027417">
    <property type="entry name" value="P-loop_NTPase"/>
</dbReference>
<dbReference type="PANTHER" id="PTHR47971:SF8">
    <property type="entry name" value="KINESIN-LIKE PROTEIN"/>
    <property type="match status" value="1"/>
</dbReference>
<dbReference type="PANTHER" id="PTHR47971">
    <property type="entry name" value="KINESIN-RELATED PROTEIN 6"/>
    <property type="match status" value="1"/>
</dbReference>
<dbReference type="Pfam" id="PF00225">
    <property type="entry name" value="Kinesin"/>
    <property type="match status" value="1"/>
</dbReference>
<dbReference type="PRINTS" id="PR00380">
    <property type="entry name" value="KINESINHEAVY"/>
</dbReference>
<dbReference type="SMART" id="SM00129">
    <property type="entry name" value="KISc"/>
    <property type="match status" value="1"/>
</dbReference>
<dbReference type="SUPFAM" id="SSF52540">
    <property type="entry name" value="P-loop containing nucleoside triphosphate hydrolases"/>
    <property type="match status" value="1"/>
</dbReference>
<dbReference type="PROSITE" id="PS00411">
    <property type="entry name" value="KINESIN_MOTOR_1"/>
    <property type="match status" value="1"/>
</dbReference>
<dbReference type="PROSITE" id="PS50067">
    <property type="entry name" value="KINESIN_MOTOR_2"/>
    <property type="match status" value="1"/>
</dbReference>
<proteinExistence type="evidence at protein level"/>
<evidence type="ECO:0000255" key="1"/>
<evidence type="ECO:0000255" key="2">
    <source>
        <dbReference type="PROSITE-ProRule" id="PRU00283"/>
    </source>
</evidence>
<evidence type="ECO:0000256" key="3">
    <source>
        <dbReference type="SAM" id="MobiDB-lite"/>
    </source>
</evidence>
<evidence type="ECO:0000269" key="4">
    <source>
    </source>
</evidence>
<evidence type="ECO:0000269" key="5">
    <source>
    </source>
</evidence>
<evidence type="ECO:0000269" key="6">
    <source>
    </source>
</evidence>
<evidence type="ECO:0000269" key="7">
    <source>
    </source>
</evidence>
<evidence type="ECO:0000269" key="8">
    <source>
    </source>
</evidence>
<evidence type="ECO:0000303" key="9">
    <source>
    </source>
</evidence>
<evidence type="ECO:0000303" key="10">
    <source>
    </source>
</evidence>
<evidence type="ECO:0000303" key="11">
    <source>
    </source>
</evidence>
<evidence type="ECO:0000305" key="12"/>
<evidence type="ECO:0000312" key="13">
    <source>
        <dbReference type="Araport" id="AT3G16630"/>
    </source>
</evidence>
<evidence type="ECO:0000312" key="14">
    <source>
        <dbReference type="EMBL" id="BAB02754.1"/>
    </source>
</evidence>
<name>KN13A_ARATH</name>
<gene>
    <name evidence="11 12" type="primary">KIN13A</name>
    <name evidence="9" type="synonym">KINESIN-13A</name>
    <name evidence="13" type="ordered locus">At3g16630</name>
    <name evidence="14" type="ORF">MGL6.9</name>
</gene>
<organism>
    <name type="scientific">Arabidopsis thaliana</name>
    <name type="common">Mouse-ear cress</name>
    <dbReference type="NCBI Taxonomy" id="3702"/>
    <lineage>
        <taxon>Eukaryota</taxon>
        <taxon>Viridiplantae</taxon>
        <taxon>Streptophyta</taxon>
        <taxon>Embryophyta</taxon>
        <taxon>Tracheophyta</taxon>
        <taxon>Spermatophyta</taxon>
        <taxon>Magnoliopsida</taxon>
        <taxon>eudicotyledons</taxon>
        <taxon>Gunneridae</taxon>
        <taxon>Pentapetalae</taxon>
        <taxon>rosids</taxon>
        <taxon>malvids</taxon>
        <taxon>Brassicales</taxon>
        <taxon>Brassicaceae</taxon>
        <taxon>Camelineae</taxon>
        <taxon>Arabidopsis</taxon>
    </lineage>
</organism>